<protein>
    <recommendedName>
        <fullName evidence="1">Formimidoylglutamase</fullName>
        <ecNumber evidence="1">3.5.3.8</ecNumber>
    </recommendedName>
    <alternativeName>
        <fullName evidence="1">Formiminoglutamase</fullName>
    </alternativeName>
    <alternativeName>
        <fullName evidence="1">Formiminoglutamate hydrolase</fullName>
    </alternativeName>
</protein>
<proteinExistence type="evidence at protein level"/>
<comment type="function">
    <text evidence="1">Catalyzes the conversion of N-formimidoyl-L-glutamate to L-glutamate and formamide.</text>
</comment>
<comment type="catalytic activity">
    <reaction evidence="1">
        <text>N-formimidoyl-L-glutamate + H2O = formamide + L-glutamate</text>
        <dbReference type="Rhea" id="RHEA:22492"/>
        <dbReference type="ChEBI" id="CHEBI:15377"/>
        <dbReference type="ChEBI" id="CHEBI:16397"/>
        <dbReference type="ChEBI" id="CHEBI:29985"/>
        <dbReference type="ChEBI" id="CHEBI:58928"/>
        <dbReference type="EC" id="3.5.3.8"/>
    </reaction>
</comment>
<comment type="cofactor">
    <cofactor evidence="1">
        <name>Mn(2+)</name>
        <dbReference type="ChEBI" id="CHEBI:29035"/>
    </cofactor>
    <text evidence="1">Binds 2 manganese ions per subunit.</text>
</comment>
<comment type="pathway">
    <text evidence="1">Amino-acid degradation; L-histidine degradation into L-glutamate; L-glutamate from N-formimidoyl-L-glutamate (hydrolase route): step 1/1.</text>
</comment>
<comment type="similarity">
    <text evidence="1">Belongs to the arginase family.</text>
</comment>
<dbReference type="EC" id="3.5.3.8" evidence="1"/>
<dbReference type="EMBL" id="BA000018">
    <property type="protein sequence ID" value="BAB43426.1"/>
    <property type="molecule type" value="Genomic_DNA"/>
</dbReference>
<dbReference type="PIR" id="A99933">
    <property type="entry name" value="A99933"/>
</dbReference>
<dbReference type="RefSeq" id="WP_000277968.1">
    <property type="nucleotide sequence ID" value="NC_002745.2"/>
</dbReference>
<dbReference type="SMR" id="P99158"/>
<dbReference type="EnsemblBacteria" id="BAB43426">
    <property type="protein sequence ID" value="BAB43426"/>
    <property type="gene ID" value="BAB43426"/>
</dbReference>
<dbReference type="KEGG" id="sau:SA2125"/>
<dbReference type="HOGENOM" id="CLU_039478_2_0_9"/>
<dbReference type="UniPathway" id="UPA00379">
    <property type="reaction ID" value="UER00552"/>
</dbReference>
<dbReference type="GO" id="GO:0008783">
    <property type="term" value="F:agmatinase activity"/>
    <property type="evidence" value="ECO:0007669"/>
    <property type="project" value="TreeGrafter"/>
</dbReference>
<dbReference type="GO" id="GO:0050415">
    <property type="term" value="F:formimidoylglutamase activity"/>
    <property type="evidence" value="ECO:0007669"/>
    <property type="project" value="UniProtKB-UniRule"/>
</dbReference>
<dbReference type="GO" id="GO:0030145">
    <property type="term" value="F:manganese ion binding"/>
    <property type="evidence" value="ECO:0007669"/>
    <property type="project" value="UniProtKB-UniRule"/>
</dbReference>
<dbReference type="GO" id="GO:0019556">
    <property type="term" value="P:L-histidine catabolic process to glutamate and formamide"/>
    <property type="evidence" value="ECO:0007669"/>
    <property type="project" value="UniProtKB-UniPathway"/>
</dbReference>
<dbReference type="GO" id="GO:0019557">
    <property type="term" value="P:L-histidine catabolic process to glutamate and formate"/>
    <property type="evidence" value="ECO:0007669"/>
    <property type="project" value="UniProtKB-UniPathway"/>
</dbReference>
<dbReference type="GO" id="GO:0033389">
    <property type="term" value="P:putrescine biosynthetic process from arginine, via agmatine"/>
    <property type="evidence" value="ECO:0007669"/>
    <property type="project" value="TreeGrafter"/>
</dbReference>
<dbReference type="CDD" id="cd09988">
    <property type="entry name" value="Formimidoylglutamase"/>
    <property type="match status" value="1"/>
</dbReference>
<dbReference type="FunFam" id="3.40.800.10:FF:000015">
    <property type="entry name" value="Formimidoylglutamase"/>
    <property type="match status" value="1"/>
</dbReference>
<dbReference type="Gene3D" id="3.40.800.10">
    <property type="entry name" value="Ureohydrolase domain"/>
    <property type="match status" value="1"/>
</dbReference>
<dbReference type="HAMAP" id="MF_00737">
    <property type="entry name" value="Formimidoylglutam"/>
    <property type="match status" value="1"/>
</dbReference>
<dbReference type="InterPro" id="IPR005923">
    <property type="entry name" value="HutG"/>
</dbReference>
<dbReference type="InterPro" id="IPR006035">
    <property type="entry name" value="Ureohydrolase"/>
</dbReference>
<dbReference type="InterPro" id="IPR023696">
    <property type="entry name" value="Ureohydrolase_dom_sf"/>
</dbReference>
<dbReference type="NCBIfam" id="TIGR01227">
    <property type="entry name" value="hutG"/>
    <property type="match status" value="1"/>
</dbReference>
<dbReference type="PANTHER" id="PTHR11358">
    <property type="entry name" value="ARGINASE/AGMATINASE"/>
    <property type="match status" value="1"/>
</dbReference>
<dbReference type="PANTHER" id="PTHR11358:SF35">
    <property type="entry name" value="FORMIMIDOYLGLUTAMASE"/>
    <property type="match status" value="1"/>
</dbReference>
<dbReference type="Pfam" id="PF00491">
    <property type="entry name" value="Arginase"/>
    <property type="match status" value="1"/>
</dbReference>
<dbReference type="PIRSF" id="PIRSF036979">
    <property type="entry name" value="Arginase"/>
    <property type="match status" value="1"/>
</dbReference>
<dbReference type="SUPFAM" id="SSF52768">
    <property type="entry name" value="Arginase/deacetylase"/>
    <property type="match status" value="1"/>
</dbReference>
<dbReference type="PROSITE" id="PS51409">
    <property type="entry name" value="ARGINASE_2"/>
    <property type="match status" value="1"/>
</dbReference>
<organism>
    <name type="scientific">Staphylococcus aureus (strain N315)</name>
    <dbReference type="NCBI Taxonomy" id="158879"/>
    <lineage>
        <taxon>Bacteria</taxon>
        <taxon>Bacillati</taxon>
        <taxon>Bacillota</taxon>
        <taxon>Bacilli</taxon>
        <taxon>Bacillales</taxon>
        <taxon>Staphylococcaceae</taxon>
        <taxon>Staphylococcus</taxon>
    </lineage>
</organism>
<gene>
    <name evidence="1" type="primary">hutG</name>
    <name type="ordered locus">SA2125</name>
</gene>
<evidence type="ECO:0000255" key="1">
    <source>
        <dbReference type="HAMAP-Rule" id="MF_00737"/>
    </source>
</evidence>
<keyword id="KW-0369">Histidine metabolism</keyword>
<keyword id="KW-0378">Hydrolase</keyword>
<keyword id="KW-0464">Manganese</keyword>
<keyword id="KW-0479">Metal-binding</keyword>
<reference key="1">
    <citation type="journal article" date="2001" name="Lancet">
        <title>Whole genome sequencing of meticillin-resistant Staphylococcus aureus.</title>
        <authorList>
            <person name="Kuroda M."/>
            <person name="Ohta T."/>
            <person name="Uchiyama I."/>
            <person name="Baba T."/>
            <person name="Yuzawa H."/>
            <person name="Kobayashi I."/>
            <person name="Cui L."/>
            <person name="Oguchi A."/>
            <person name="Aoki K."/>
            <person name="Nagai Y."/>
            <person name="Lian J.-Q."/>
            <person name="Ito T."/>
            <person name="Kanamori M."/>
            <person name="Matsumaru H."/>
            <person name="Maruyama A."/>
            <person name="Murakami H."/>
            <person name="Hosoyama A."/>
            <person name="Mizutani-Ui Y."/>
            <person name="Takahashi N.K."/>
            <person name="Sawano T."/>
            <person name="Inoue R."/>
            <person name="Kaito C."/>
            <person name="Sekimizu K."/>
            <person name="Hirakawa H."/>
            <person name="Kuhara S."/>
            <person name="Goto S."/>
            <person name="Yabuzaki J."/>
            <person name="Kanehisa M."/>
            <person name="Yamashita A."/>
            <person name="Oshima K."/>
            <person name="Furuya K."/>
            <person name="Yoshino C."/>
            <person name="Shiba T."/>
            <person name="Hattori M."/>
            <person name="Ogasawara N."/>
            <person name="Hayashi H."/>
            <person name="Hiramatsu K."/>
        </authorList>
    </citation>
    <scope>NUCLEOTIDE SEQUENCE [LARGE SCALE GENOMIC DNA]</scope>
    <source>
        <strain>N315</strain>
    </source>
</reference>
<reference key="2">
    <citation type="journal article" date="2005" name="J. Microbiol. Methods">
        <title>Correlation of proteomic and transcriptomic profiles of Staphylococcus aureus during the post-exponential phase of growth.</title>
        <authorList>
            <person name="Scherl A."/>
            <person name="Francois P."/>
            <person name="Bento M."/>
            <person name="Deshusses J.M."/>
            <person name="Charbonnier Y."/>
            <person name="Converset V."/>
            <person name="Huyghe A."/>
            <person name="Walter N."/>
            <person name="Hoogland C."/>
            <person name="Appel R.D."/>
            <person name="Sanchez J.-C."/>
            <person name="Zimmermann-Ivol C.G."/>
            <person name="Corthals G.L."/>
            <person name="Hochstrasser D.F."/>
            <person name="Schrenzel J."/>
        </authorList>
    </citation>
    <scope>IDENTIFICATION BY MASS SPECTROMETRY</scope>
    <source>
        <strain>N315</strain>
    </source>
</reference>
<reference key="3">
    <citation type="submission" date="2007-10" db="UniProtKB">
        <title>Shotgun proteomic analysis of total and membrane protein extracts of S. aureus strain N315.</title>
        <authorList>
            <person name="Vaezzadeh A.R."/>
            <person name="Deshusses J."/>
            <person name="Lescuyer P."/>
            <person name="Hochstrasser D.F."/>
        </authorList>
    </citation>
    <scope>IDENTIFICATION BY MASS SPECTROMETRY [LARGE SCALE ANALYSIS]</scope>
    <source>
        <strain>N315</strain>
    </source>
</reference>
<sequence length="311" mass="34513">MYKQGEPNLWTGRLDSETDPKKFRHFQTVTFEDLSKLEKSSMPSGVGILGYAVDKGVALNKGRIGAKEGPDAIKQAFAGLPDLNQCETLVDYGNVYHDHEELIDTQKEFAMLAAKSIANHRQTFLLGGGHDIAYAQYLATRKVYPTQSIGVINIDAHFDTRAEQQSTSGTSFRQILEEDENTDYLVLGIAQGGNTQSLFDYAKEKKIDYVFADELLSHVSPTIKDMIERFVHEHDVIMFTICMDVIDSAFAPGVSAPAVLGLYPHTVLELAKRIIPSDKVSSVSIAEMNPTYDADNRTAKLVANLVHHFLK</sequence>
<name>HUTG_STAAN</name>
<accession>P99158</accession>
<accession>Q99RT9</accession>
<feature type="chain" id="PRO_0000173768" description="Formimidoylglutamase">
    <location>
        <begin position="1"/>
        <end position="311"/>
    </location>
</feature>
<feature type="binding site" evidence="1">
    <location>
        <position position="130"/>
    </location>
    <ligand>
        <name>Mn(2+)</name>
        <dbReference type="ChEBI" id="CHEBI:29035"/>
        <label>1</label>
    </ligand>
</feature>
<feature type="binding site" evidence="1">
    <location>
        <position position="155"/>
    </location>
    <ligand>
        <name>Mn(2+)</name>
        <dbReference type="ChEBI" id="CHEBI:29035"/>
        <label>1</label>
    </ligand>
</feature>
<feature type="binding site" evidence="1">
    <location>
        <position position="155"/>
    </location>
    <ligand>
        <name>Mn(2+)</name>
        <dbReference type="ChEBI" id="CHEBI:29035"/>
        <label>2</label>
    </ligand>
</feature>
<feature type="binding site" evidence="1">
    <location>
        <position position="157"/>
    </location>
    <ligand>
        <name>Mn(2+)</name>
        <dbReference type="ChEBI" id="CHEBI:29035"/>
        <label>2</label>
    </ligand>
</feature>
<feature type="binding site" evidence="1">
    <location>
        <position position="159"/>
    </location>
    <ligand>
        <name>Mn(2+)</name>
        <dbReference type="ChEBI" id="CHEBI:29035"/>
        <label>1</label>
    </ligand>
</feature>
<feature type="binding site" evidence="1">
    <location>
        <position position="242"/>
    </location>
    <ligand>
        <name>Mn(2+)</name>
        <dbReference type="ChEBI" id="CHEBI:29035"/>
        <label>1</label>
    </ligand>
</feature>
<feature type="binding site" evidence="1">
    <location>
        <position position="242"/>
    </location>
    <ligand>
        <name>Mn(2+)</name>
        <dbReference type="ChEBI" id="CHEBI:29035"/>
        <label>2</label>
    </ligand>
</feature>
<feature type="binding site" evidence="1">
    <location>
        <position position="244"/>
    </location>
    <ligand>
        <name>Mn(2+)</name>
        <dbReference type="ChEBI" id="CHEBI:29035"/>
        <label>2</label>
    </ligand>
</feature>